<dbReference type="EMBL" id="BA000011">
    <property type="protein sequence ID" value="BAB59704.1"/>
    <property type="molecule type" value="Genomic_DNA"/>
</dbReference>
<dbReference type="RefSeq" id="WP_010916821.1">
    <property type="nucleotide sequence ID" value="NC_002689.2"/>
</dbReference>
<dbReference type="SMR" id="Q97B95"/>
<dbReference type="STRING" id="273116.gene:9381347"/>
<dbReference type="PaxDb" id="273116-14324777"/>
<dbReference type="GeneID" id="1441079"/>
<dbReference type="KEGG" id="tvo:TVG0550709"/>
<dbReference type="eggNOG" id="arCOG04239">
    <property type="taxonomic scope" value="Archaea"/>
</dbReference>
<dbReference type="HOGENOM" id="CLU_089738_1_1_2"/>
<dbReference type="OrthoDB" id="10429at2157"/>
<dbReference type="PhylomeDB" id="Q97B95"/>
<dbReference type="Proteomes" id="UP000001017">
    <property type="component" value="Chromosome"/>
</dbReference>
<dbReference type="GO" id="GO:0015935">
    <property type="term" value="C:small ribosomal subunit"/>
    <property type="evidence" value="ECO:0007669"/>
    <property type="project" value="InterPro"/>
</dbReference>
<dbReference type="GO" id="GO:0019843">
    <property type="term" value="F:rRNA binding"/>
    <property type="evidence" value="ECO:0007669"/>
    <property type="project" value="UniProtKB-UniRule"/>
</dbReference>
<dbReference type="GO" id="GO:0003735">
    <property type="term" value="F:structural constituent of ribosome"/>
    <property type="evidence" value="ECO:0007669"/>
    <property type="project" value="InterPro"/>
</dbReference>
<dbReference type="GO" id="GO:0042274">
    <property type="term" value="P:ribosomal small subunit biogenesis"/>
    <property type="evidence" value="ECO:0007669"/>
    <property type="project" value="TreeGrafter"/>
</dbReference>
<dbReference type="GO" id="GO:0006412">
    <property type="term" value="P:translation"/>
    <property type="evidence" value="ECO:0007669"/>
    <property type="project" value="UniProtKB-UniRule"/>
</dbReference>
<dbReference type="CDD" id="cd00165">
    <property type="entry name" value="S4"/>
    <property type="match status" value="1"/>
</dbReference>
<dbReference type="Gene3D" id="1.10.1050.10">
    <property type="entry name" value="Ribosomal Protein S4 Delta 41, Chain A, domain 1"/>
    <property type="match status" value="1"/>
</dbReference>
<dbReference type="Gene3D" id="3.10.290.10">
    <property type="entry name" value="RNA-binding S4 domain"/>
    <property type="match status" value="1"/>
</dbReference>
<dbReference type="HAMAP" id="MF_01306_A">
    <property type="entry name" value="Ribosomal_uS4_A"/>
    <property type="match status" value="1"/>
</dbReference>
<dbReference type="InterPro" id="IPR022801">
    <property type="entry name" value="Ribosomal_uS4"/>
</dbReference>
<dbReference type="InterPro" id="IPR022802">
    <property type="entry name" value="Ribosomal_uS4_arc"/>
</dbReference>
<dbReference type="InterPro" id="IPR018079">
    <property type="entry name" value="Ribosomal_uS4_CS"/>
</dbReference>
<dbReference type="InterPro" id="IPR005710">
    <property type="entry name" value="Ribosomal_uS4_euk/arc"/>
</dbReference>
<dbReference type="InterPro" id="IPR001912">
    <property type="entry name" value="Ribosomal_uS4_N"/>
</dbReference>
<dbReference type="InterPro" id="IPR002942">
    <property type="entry name" value="S4_RNA-bd"/>
</dbReference>
<dbReference type="InterPro" id="IPR036986">
    <property type="entry name" value="S4_RNA-bd_sf"/>
</dbReference>
<dbReference type="NCBIfam" id="NF003139">
    <property type="entry name" value="PRK04051.1"/>
    <property type="match status" value="1"/>
</dbReference>
<dbReference type="NCBIfam" id="TIGR01018">
    <property type="entry name" value="uS4_arch"/>
    <property type="match status" value="1"/>
</dbReference>
<dbReference type="PANTHER" id="PTHR11831">
    <property type="entry name" value="30S 40S RIBOSOMAL PROTEIN"/>
    <property type="match status" value="1"/>
</dbReference>
<dbReference type="PANTHER" id="PTHR11831:SF5">
    <property type="entry name" value="40S RIBOSOMAL PROTEIN S9"/>
    <property type="match status" value="1"/>
</dbReference>
<dbReference type="Pfam" id="PF00163">
    <property type="entry name" value="Ribosomal_S4"/>
    <property type="match status" value="1"/>
</dbReference>
<dbReference type="Pfam" id="PF01479">
    <property type="entry name" value="S4"/>
    <property type="match status" value="1"/>
</dbReference>
<dbReference type="SMART" id="SM01390">
    <property type="entry name" value="Ribosomal_S4"/>
    <property type="match status" value="1"/>
</dbReference>
<dbReference type="SMART" id="SM00363">
    <property type="entry name" value="S4"/>
    <property type="match status" value="1"/>
</dbReference>
<dbReference type="SUPFAM" id="SSF55174">
    <property type="entry name" value="Alpha-L RNA-binding motif"/>
    <property type="match status" value="1"/>
</dbReference>
<dbReference type="PROSITE" id="PS00632">
    <property type="entry name" value="RIBOSOMAL_S4"/>
    <property type="match status" value="1"/>
</dbReference>
<dbReference type="PROSITE" id="PS50889">
    <property type="entry name" value="S4"/>
    <property type="match status" value="1"/>
</dbReference>
<proteinExistence type="inferred from homology"/>
<keyword id="KW-0687">Ribonucleoprotein</keyword>
<keyword id="KW-0689">Ribosomal protein</keyword>
<keyword id="KW-0694">RNA-binding</keyword>
<keyword id="KW-0699">rRNA-binding</keyword>
<reference key="1">
    <citation type="journal article" date="2000" name="Proc. Natl. Acad. Sci. U.S.A.">
        <title>Archaeal adaptation to higher temperatures revealed by genomic sequence of Thermoplasma volcanium.</title>
        <authorList>
            <person name="Kawashima T."/>
            <person name="Amano N."/>
            <person name="Koike H."/>
            <person name="Makino S."/>
            <person name="Higuchi S."/>
            <person name="Kawashima-Ohya Y."/>
            <person name="Watanabe K."/>
            <person name="Yamazaki M."/>
            <person name="Kanehori K."/>
            <person name="Kawamoto T."/>
            <person name="Nunoshiba T."/>
            <person name="Yamamoto Y."/>
            <person name="Aramaki H."/>
            <person name="Makino K."/>
            <person name="Suzuki M."/>
        </authorList>
    </citation>
    <scope>NUCLEOTIDE SEQUENCE [LARGE SCALE GENOMIC DNA]</scope>
    <source>
        <strain>ATCC 51530 / DSM 4299 / JCM 9571 / NBRC 15438 / GSS1</strain>
    </source>
</reference>
<feature type="chain" id="PRO_0000132524" description="Small ribosomal subunit protein uS4">
    <location>
        <begin position="1"/>
        <end position="200"/>
    </location>
</feature>
<feature type="domain" description="S4 RNA-binding" evidence="1">
    <location>
        <begin position="106"/>
        <end position="170"/>
    </location>
</feature>
<feature type="region of interest" description="Disordered" evidence="2">
    <location>
        <begin position="178"/>
        <end position="200"/>
    </location>
</feature>
<feature type="compositionally biased region" description="Basic and acidic residues" evidence="2">
    <location>
        <begin position="179"/>
        <end position="190"/>
    </location>
</feature>
<organism>
    <name type="scientific">Thermoplasma volcanium (strain ATCC 51530 / DSM 4299 / JCM 9571 / NBRC 15438 / GSS1)</name>
    <dbReference type="NCBI Taxonomy" id="273116"/>
    <lineage>
        <taxon>Archaea</taxon>
        <taxon>Methanobacteriati</taxon>
        <taxon>Thermoplasmatota</taxon>
        <taxon>Thermoplasmata</taxon>
        <taxon>Thermoplasmatales</taxon>
        <taxon>Thermoplasmataceae</taxon>
        <taxon>Thermoplasma</taxon>
    </lineage>
</organism>
<protein>
    <recommendedName>
        <fullName evidence="1">Small ribosomal subunit protein uS4</fullName>
    </recommendedName>
    <alternativeName>
        <fullName evidence="3">30S ribosomal protein S4</fullName>
    </alternativeName>
</protein>
<evidence type="ECO:0000255" key="1">
    <source>
        <dbReference type="HAMAP-Rule" id="MF_01306"/>
    </source>
</evidence>
<evidence type="ECO:0000256" key="2">
    <source>
        <dbReference type="SAM" id="MobiDB-lite"/>
    </source>
</evidence>
<evidence type="ECO:0000305" key="3"/>
<name>RS4_THEVO</name>
<accession>Q97B95</accession>
<gene>
    <name evidence="1" type="primary">rps4</name>
    <name type="ordered locus">TV0562</name>
    <name type="ORF">TVG0550709</name>
</gene>
<comment type="function">
    <text evidence="1">One of the primary rRNA binding proteins, it binds directly to 16S rRNA where it nucleates assembly of the body of the 30S subunit.</text>
</comment>
<comment type="function">
    <text evidence="1">With S5 and S12 plays an important role in translational accuracy.</text>
</comment>
<comment type="subunit">
    <text evidence="1">Part of the 30S ribosomal subunit. Contacts protein S5. The interaction surface between S4 and S5 is involved in control of translational fidelity.</text>
</comment>
<comment type="similarity">
    <text evidence="1">Belongs to the universal ribosomal protein uS4 family.</text>
</comment>
<sequence length="200" mass="23161">MGDPKFHHKKYSTPRHPWEKDRIDEENKILVKYGLKNKREIWRSEAMLSSIRSQARYLRARLRASDANAQKQLERMIKRLSRYKILSDKATLDDVLSLTVENILDRRLQTIVFKKNLALSEKQARQLITHGHITVNGRRVTVPGMLVEAQYEDTIAYYENSPIANELHPIRQALLSPAERVKEEAEKEAAASEDGGEQDE</sequence>